<organism>
    <name type="scientific">Shigella sonnei (strain Ss046)</name>
    <dbReference type="NCBI Taxonomy" id="300269"/>
    <lineage>
        <taxon>Bacteria</taxon>
        <taxon>Pseudomonadati</taxon>
        <taxon>Pseudomonadota</taxon>
        <taxon>Gammaproteobacteria</taxon>
        <taxon>Enterobacterales</taxon>
        <taxon>Enterobacteriaceae</taxon>
        <taxon>Shigella</taxon>
    </lineage>
</organism>
<evidence type="ECO:0000255" key="1">
    <source>
        <dbReference type="HAMAP-Rule" id="MF_01545"/>
    </source>
</evidence>
<protein>
    <recommendedName>
        <fullName evidence="1">p-hydroxybenzoic acid efflux pump subunit AaeB</fullName>
        <shortName evidence="1">pHBA efflux pump protein B</shortName>
    </recommendedName>
</protein>
<comment type="function">
    <text evidence="1">Forms an efflux pump with AaeA. Could function as a metabolic relief valve, allowing to eliminate certain compounds when they accumulate to high levels in the cell.</text>
</comment>
<comment type="subcellular location">
    <subcellularLocation>
        <location evidence="1">Cell inner membrane</location>
        <topology evidence="1">Multi-pass membrane protein</topology>
    </subcellularLocation>
</comment>
<comment type="similarity">
    <text evidence="1">Belongs to the aromatic acid exporter ArAE (TC 2.A.85) family.</text>
</comment>
<keyword id="KW-0997">Cell inner membrane</keyword>
<keyword id="KW-1003">Cell membrane</keyword>
<keyword id="KW-0472">Membrane</keyword>
<keyword id="KW-1185">Reference proteome</keyword>
<keyword id="KW-0812">Transmembrane</keyword>
<keyword id="KW-1133">Transmembrane helix</keyword>
<keyword id="KW-0813">Transport</keyword>
<sequence>MGIFSIANQHIRFAVKLATAIVLALFVGFHFQLETPRWAVLTAAIVAAGPAFAAGGEPYSGAIRYRGFLRIIGTFIGCIAGLVIIIAMIRAPLLMILVCCIWAGFCTWISSLVRIENSYAWGLAGYTALIIVITIQPEPLLTPQFAVERCSEIVIGIVCAIMADLLFSPRSIKQEVDRELESLLVAQYQLMQLCIKHGDGEVVDKAWGDLVRRTTALQGMRSNLNMESSRWARANRRLKAINTLSLTLITQSCETYLIQNTRPELITDTFREFFDTPVETAQDVHKQLKRLRRVIAWTGERETPVTIYSWVAAATRYQLLKRGVISNTKINATEEEILQGEPEVKVESAERHHAMVNFWRTTLSCILGTLFWLWTGWTSGSGAMVMIAVVTSLAMRLPNPRMVAIDFIYGTLAALPLGLLYFLVIIPNTQQSMLLLCISLAVLGFFLGIEVQKRRLGSMGALASTINIIVLDNPMTFHFSQFLDSALGQIVGCVLAFTVILLVRDKSRDRTGRVLLNQFVFAAVSAMTTNVARRKENHLPALYQQLFLLMNKFPGDLPKFRLALTMIIAHQRLRDAPIPVNEDLSAFHRQMRRTADHVISARSDDKRRRYFGQLLEELEIYQEKLRIWQAPPQVTEPVHRLAGMLHKYQHALTDS</sequence>
<gene>
    <name evidence="1" type="primary">aaeB</name>
    <name type="ordered locus">SSON_3382</name>
</gene>
<reference key="1">
    <citation type="journal article" date="2005" name="Nucleic Acids Res.">
        <title>Genome dynamics and diversity of Shigella species, the etiologic agents of bacillary dysentery.</title>
        <authorList>
            <person name="Yang F."/>
            <person name="Yang J."/>
            <person name="Zhang X."/>
            <person name="Chen L."/>
            <person name="Jiang Y."/>
            <person name="Yan Y."/>
            <person name="Tang X."/>
            <person name="Wang J."/>
            <person name="Xiong Z."/>
            <person name="Dong J."/>
            <person name="Xue Y."/>
            <person name="Zhu Y."/>
            <person name="Xu X."/>
            <person name="Sun L."/>
            <person name="Chen S."/>
            <person name="Nie H."/>
            <person name="Peng J."/>
            <person name="Xu J."/>
            <person name="Wang Y."/>
            <person name="Yuan Z."/>
            <person name="Wen Y."/>
            <person name="Yao Z."/>
            <person name="Shen Y."/>
            <person name="Qiang B."/>
            <person name="Hou Y."/>
            <person name="Yu J."/>
            <person name="Jin Q."/>
        </authorList>
    </citation>
    <scope>NUCLEOTIDE SEQUENCE [LARGE SCALE GENOMIC DNA]</scope>
    <source>
        <strain>Ss046</strain>
    </source>
</reference>
<proteinExistence type="inferred from homology"/>
<dbReference type="EMBL" id="CP000038">
    <property type="protein sequence ID" value="AAZ89955.1"/>
    <property type="molecule type" value="Genomic_DNA"/>
</dbReference>
<dbReference type="RefSeq" id="WP_000510948.1">
    <property type="nucleotide sequence ID" value="NC_007384.1"/>
</dbReference>
<dbReference type="SMR" id="Q3YX07"/>
<dbReference type="GeneID" id="93778745"/>
<dbReference type="KEGG" id="ssn:SSON_3382"/>
<dbReference type="HOGENOM" id="CLU_027647_0_0_6"/>
<dbReference type="Proteomes" id="UP000002529">
    <property type="component" value="Chromosome"/>
</dbReference>
<dbReference type="GO" id="GO:0005886">
    <property type="term" value="C:plasma membrane"/>
    <property type="evidence" value="ECO:0007669"/>
    <property type="project" value="UniProtKB-SubCell"/>
</dbReference>
<dbReference type="GO" id="GO:0022857">
    <property type="term" value="F:transmembrane transporter activity"/>
    <property type="evidence" value="ECO:0007669"/>
    <property type="project" value="UniProtKB-UniRule"/>
</dbReference>
<dbReference type="GO" id="GO:0046942">
    <property type="term" value="P:carboxylic acid transport"/>
    <property type="evidence" value="ECO:0007669"/>
    <property type="project" value="InterPro"/>
</dbReference>
<dbReference type="HAMAP" id="MF_01545">
    <property type="entry name" value="AaeB"/>
    <property type="match status" value="1"/>
</dbReference>
<dbReference type="InterPro" id="IPR006726">
    <property type="entry name" value="PHBA_efflux_AaeB/fusaric-R"/>
</dbReference>
<dbReference type="InterPro" id="IPR023706">
    <property type="entry name" value="PHBA_efflux_pump_AaeB"/>
</dbReference>
<dbReference type="NCBIfam" id="NF007916">
    <property type="entry name" value="PRK10631.1"/>
    <property type="match status" value="1"/>
</dbReference>
<dbReference type="PANTHER" id="PTHR30509:SF9">
    <property type="entry name" value="MULTIDRUG RESISTANCE PROTEIN MDTO"/>
    <property type="match status" value="1"/>
</dbReference>
<dbReference type="PANTHER" id="PTHR30509">
    <property type="entry name" value="P-HYDROXYBENZOIC ACID EFFLUX PUMP SUBUNIT-RELATED"/>
    <property type="match status" value="1"/>
</dbReference>
<dbReference type="Pfam" id="PF04632">
    <property type="entry name" value="FUSC"/>
    <property type="match status" value="1"/>
</dbReference>
<feature type="chain" id="PRO_0000300568" description="p-hydroxybenzoic acid efflux pump subunit AaeB">
    <location>
        <begin position="1"/>
        <end position="655"/>
    </location>
</feature>
<feature type="transmembrane region" description="Helical" evidence="1">
    <location>
        <begin position="13"/>
        <end position="33"/>
    </location>
</feature>
<feature type="transmembrane region" description="Helical" evidence="1">
    <location>
        <begin position="38"/>
        <end position="58"/>
    </location>
</feature>
<feature type="transmembrane region" description="Helical" evidence="1">
    <location>
        <begin position="69"/>
        <end position="89"/>
    </location>
</feature>
<feature type="transmembrane region" description="Helical" evidence="1">
    <location>
        <begin position="93"/>
        <end position="113"/>
    </location>
</feature>
<feature type="transmembrane region" description="Helical" evidence="1">
    <location>
        <begin position="121"/>
        <end position="141"/>
    </location>
</feature>
<feature type="transmembrane region" description="Helical" evidence="1">
    <location>
        <begin position="152"/>
        <end position="172"/>
    </location>
</feature>
<feature type="transmembrane region" description="Helical" evidence="1">
    <location>
        <begin position="370"/>
        <end position="390"/>
    </location>
</feature>
<feature type="transmembrane region" description="Helical" evidence="1">
    <location>
        <begin position="407"/>
        <end position="427"/>
    </location>
</feature>
<feature type="transmembrane region" description="Helical" evidence="1">
    <location>
        <begin position="431"/>
        <end position="451"/>
    </location>
</feature>
<feature type="transmembrane region" description="Helical" evidence="1">
    <location>
        <begin position="459"/>
        <end position="479"/>
    </location>
</feature>
<feature type="transmembrane region" description="Helical" evidence="1">
    <location>
        <begin position="482"/>
        <end position="502"/>
    </location>
</feature>
<name>AAEB_SHISS</name>
<accession>Q3YX07</accession>